<organism>
    <name type="scientific">Clostridium scatologenes</name>
    <dbReference type="NCBI Taxonomy" id="1548"/>
    <lineage>
        <taxon>Bacteria</taxon>
        <taxon>Bacillati</taxon>
        <taxon>Bacillota</taxon>
        <taxon>Clostridia</taxon>
        <taxon>Eubacteriales</taxon>
        <taxon>Clostridiaceae</taxon>
        <taxon>Clostridium</taxon>
    </lineage>
</organism>
<sequence>MNVKETKLEDVLKSRGIDMKDAYNISEADIPEAKESTQKLMDIYYTLKVTADMEAAYWYNRTWWENDGEVIEVRRAKAVAASLSHMTPTILPYEKLVMNKTKNVRGAFPFPWVCASFFNAQAEALMNEVDAPAENEADSVSVVGAGGGNVTESYGNVISIAKKFGMRKEEIPVLVKTSKPWEGISVEELSNKYSKMTPGYDQFKNIMESVICMFDSFAIPQGREVINYYMPLQYGFDGIIKLCDEKIAEVMGEAGDDGDFGMSRGYYYAAMKEITKGLSAWCENYSKRAKYLASIETDSEIKANYEKIEEVMGNIAHKKPANFWEAIQMTLCCHFGVVNEDPQSGLSIGRLGQVLQPFYEKDVEDGIMTDEEVIELLELYRIKITCIECFASAGVSGGVLSGNTFNNLSLGGQNYDGLSAVTPLEYLIVEAGMRNQTPQPTLSVLYDEKTPEDFLMKAASCTKLGLGYPAWMNNQTGMNFMMRNYGPEGMDLHDARAWCLGGCLESAPGCFLPLEYNGKVTMIPGGASPTCGTGVHFIGMPKVLELVLTNGLDKRTGKQVYPPHNKKLDSYETMVNQWKEYMELTTDVVNRCNNIQMDIWRKYNMPAVNSLLKPDCFKKGKHIGTMGARYNSCINFESCGTITFVNSLSSIKKNVFDDSKFTIEEMTDAMLNNFGFKTAYETEVFSPDFRESTDKSTKYEKIFAACVNAPKYGNADKYADEIFKAYHYYIYDMTHKFRSYYGKPLYLCQISVSTHGPQGFVTLATADGRLAGTTYSDGSVSAAAGTDKNGIYAIFESATVYDHSMHQNAQMNLKLHPTAVKGINGTRKLLDLVRAYMRKGGFHVQFNVVDSKTLRDAQLTPEKYRELMVRVAGFTQYWCEIGKPIQDEVIYRTEYDK</sequence>
<dbReference type="EC" id="4.1.1.83" evidence="4"/>
<dbReference type="EMBL" id="DQ227741">
    <property type="protein sequence ID" value="ABB05046.1"/>
    <property type="molecule type" value="Genomic_DNA"/>
</dbReference>
<dbReference type="RefSeq" id="WP_029163539.1">
    <property type="nucleotide sequence ID" value="NZ_CP009933.1"/>
</dbReference>
<dbReference type="PDB" id="2Y8N">
    <property type="method" value="X-ray"/>
    <property type="resolution" value="1.75 A"/>
    <property type="chains" value="A/C=1-897"/>
</dbReference>
<dbReference type="PDB" id="2YAJ">
    <property type="method" value="X-ray"/>
    <property type="resolution" value="1.81 A"/>
    <property type="chains" value="A/C=1-897"/>
</dbReference>
<dbReference type="PDBsum" id="2Y8N"/>
<dbReference type="PDBsum" id="2YAJ"/>
<dbReference type="SMR" id="Q38HX4"/>
<dbReference type="STRING" id="1548.CSCA_5035"/>
<dbReference type="BRENDA" id="4.1.1.83">
    <property type="organism ID" value="9686"/>
</dbReference>
<dbReference type="SABIO-RK" id="Q38HX4"/>
<dbReference type="EvolutionaryTrace" id="Q38HX4"/>
<dbReference type="GO" id="GO:0005829">
    <property type="term" value="C:cytosol"/>
    <property type="evidence" value="ECO:0007669"/>
    <property type="project" value="TreeGrafter"/>
</dbReference>
<dbReference type="GO" id="GO:0043722">
    <property type="term" value="F:4-hydroxyphenylacetate decarboxylase activity"/>
    <property type="evidence" value="ECO:0007669"/>
    <property type="project" value="UniProtKB-EC"/>
</dbReference>
<dbReference type="Gene3D" id="3.20.70.20">
    <property type="match status" value="1"/>
</dbReference>
<dbReference type="InterPro" id="IPR001150">
    <property type="entry name" value="Gly_radical"/>
</dbReference>
<dbReference type="InterPro" id="IPR051215">
    <property type="entry name" value="GRE"/>
</dbReference>
<dbReference type="InterPro" id="IPR004184">
    <property type="entry name" value="PFL_dom"/>
</dbReference>
<dbReference type="NCBIfam" id="NF033715">
    <property type="entry name" value="glycyl_HPDL_Lrg"/>
    <property type="match status" value="1"/>
</dbReference>
<dbReference type="PANTHER" id="PTHR43641:SF2">
    <property type="entry name" value="DEHYDRATASE YBIW-RELATED"/>
    <property type="match status" value="1"/>
</dbReference>
<dbReference type="PANTHER" id="PTHR43641">
    <property type="entry name" value="FORMATE ACETYLTRANSFERASE 3-RELATED"/>
    <property type="match status" value="1"/>
</dbReference>
<dbReference type="Pfam" id="PF01228">
    <property type="entry name" value="Gly_radical"/>
    <property type="match status" value="1"/>
</dbReference>
<dbReference type="Pfam" id="PF02901">
    <property type="entry name" value="PFL-like"/>
    <property type="match status" value="1"/>
</dbReference>
<dbReference type="SUPFAM" id="SSF51998">
    <property type="entry name" value="PFL-like glycyl radical enzymes"/>
    <property type="match status" value="1"/>
</dbReference>
<dbReference type="PROSITE" id="PS51149">
    <property type="entry name" value="GLY_RADICAL_2"/>
    <property type="match status" value="1"/>
</dbReference>
<dbReference type="PROSITE" id="PS51554">
    <property type="entry name" value="PFL"/>
    <property type="match status" value="1"/>
</dbReference>
<evidence type="ECO:0000250" key="1">
    <source>
        <dbReference type="UniProtKB" id="Q84F16"/>
    </source>
</evidence>
<evidence type="ECO:0000255" key="2">
    <source>
        <dbReference type="PROSITE-ProRule" id="PRU00493"/>
    </source>
</evidence>
<evidence type="ECO:0000255" key="3">
    <source>
        <dbReference type="PROSITE-ProRule" id="PRU00887"/>
    </source>
</evidence>
<evidence type="ECO:0000269" key="4">
    <source>
    </source>
</evidence>
<evidence type="ECO:0000269" key="5">
    <source>
    </source>
</evidence>
<evidence type="ECO:0000303" key="6">
    <source>
    </source>
</evidence>
<evidence type="ECO:0000303" key="7">
    <source>
    </source>
</evidence>
<evidence type="ECO:0000305" key="8"/>
<evidence type="ECO:0000305" key="9">
    <source>
    </source>
</evidence>
<evidence type="ECO:0000305" key="10">
    <source>
    </source>
</evidence>
<evidence type="ECO:0000312" key="11">
    <source>
        <dbReference type="EMBL" id="ABB05046.1"/>
    </source>
</evidence>
<evidence type="ECO:0007744" key="12">
    <source>
        <dbReference type="PDB" id="2Y8N"/>
    </source>
</evidence>
<evidence type="ECO:0007744" key="13">
    <source>
        <dbReference type="PDB" id="2YAJ"/>
    </source>
</evidence>
<evidence type="ECO:0007829" key="14">
    <source>
        <dbReference type="PDB" id="2Y8N"/>
    </source>
</evidence>
<proteinExistence type="evidence at protein level"/>
<protein>
    <recommendedName>
        <fullName evidence="6">4-hydroxyphenylacetate decarboxylase glycyl radical subunit</fullName>
        <shortName>HPA decarboxylase glycyl radical subunit</shortName>
        <ecNumber evidence="4">4.1.1.83</ecNumber>
    </recommendedName>
    <alternativeName>
        <fullName evidence="7">4-hydroxyphenylacetate decarboxylase catalytic beta subunit</fullName>
    </alternativeName>
    <alternativeName>
        <fullName evidence="11">4-hydroxyphenylacetate decarboxylase large subunit</fullName>
    </alternativeName>
    <alternativeName>
        <fullName evidence="1">p-hydroxyphenylacetate decarboxylase large subunit</fullName>
    </alternativeName>
</protein>
<feature type="chain" id="PRO_0000403691" description="4-hydroxyphenylacetate decarboxylase glycyl radical subunit">
    <location>
        <begin position="1"/>
        <end position="897"/>
    </location>
</feature>
<feature type="domain" description="PFL" evidence="3">
    <location>
        <begin position="35"/>
        <end position="770"/>
    </location>
</feature>
<feature type="domain" description="Glycine radical" evidence="2">
    <location>
        <begin position="778"/>
        <end position="897"/>
    </location>
</feature>
<feature type="active site" description="Cysteine radical intermediate" evidence="10">
    <location>
        <position position="503"/>
    </location>
</feature>
<feature type="active site" description="Proton donor" evidence="10">
    <location>
        <position position="505"/>
    </location>
</feature>
<feature type="binding site" evidence="5 13">
    <location>
        <position position="344"/>
    </location>
    <ligand>
        <name>4-hydroxyphenylacetate</name>
        <dbReference type="ChEBI" id="CHEBI:48999"/>
    </ligand>
</feature>
<feature type="binding site" evidence="5 13">
    <location>
        <position position="503"/>
    </location>
    <ligand>
        <name>4-hydroxyphenylacetate</name>
        <dbReference type="ChEBI" id="CHEBI:48999"/>
    </ligand>
</feature>
<feature type="binding site" evidence="5 13">
    <location>
        <position position="536"/>
    </location>
    <ligand>
        <name>4-hydroxyphenylacetate</name>
        <dbReference type="ChEBI" id="CHEBI:48999"/>
    </ligand>
</feature>
<feature type="binding site" evidence="5 13">
    <location>
        <position position="637"/>
    </location>
    <ligand>
        <name>4-hydroxyphenylacetate</name>
        <dbReference type="ChEBI" id="CHEBI:48999"/>
    </ligand>
</feature>
<feature type="modified residue" description="Glycine radical" evidence="2 10">
    <location>
        <position position="873"/>
    </location>
</feature>
<feature type="helix" evidence="14">
    <location>
        <begin position="35"/>
        <end position="45"/>
    </location>
</feature>
<feature type="helix" evidence="14">
    <location>
        <begin position="54"/>
        <end position="65"/>
    </location>
</feature>
<feature type="turn" evidence="14">
    <location>
        <begin position="66"/>
        <end position="68"/>
    </location>
</feature>
<feature type="helix" evidence="14">
    <location>
        <begin position="71"/>
        <end position="84"/>
    </location>
</feature>
<feature type="strand" evidence="14">
    <location>
        <begin position="100"/>
        <end position="103"/>
    </location>
</feature>
<feature type="turn" evidence="14">
    <location>
        <begin position="111"/>
        <end position="113"/>
    </location>
</feature>
<feature type="helix" evidence="14">
    <location>
        <begin position="116"/>
        <end position="126"/>
    </location>
</feature>
<feature type="helix" evidence="14">
    <location>
        <begin position="136"/>
        <end position="139"/>
    </location>
</feature>
<feature type="strand" evidence="14">
    <location>
        <begin position="157"/>
        <end position="160"/>
    </location>
</feature>
<feature type="turn" evidence="14">
    <location>
        <begin position="161"/>
        <end position="163"/>
    </location>
</feature>
<feature type="strand" evidence="14">
    <location>
        <begin position="164"/>
        <end position="167"/>
    </location>
</feature>
<feature type="helix" evidence="14">
    <location>
        <begin position="168"/>
        <end position="170"/>
    </location>
</feature>
<feature type="helix" evidence="14">
    <location>
        <begin position="171"/>
        <end position="178"/>
    </location>
</feature>
<feature type="helix" evidence="14">
    <location>
        <begin position="179"/>
        <end position="181"/>
    </location>
</feature>
<feature type="turn" evidence="14">
    <location>
        <begin position="182"/>
        <end position="184"/>
    </location>
</feature>
<feature type="helix" evidence="14">
    <location>
        <begin position="186"/>
        <end position="194"/>
    </location>
</feature>
<feature type="helix" evidence="14">
    <location>
        <begin position="200"/>
        <end position="208"/>
    </location>
</feature>
<feature type="helix" evidence="14">
    <location>
        <begin position="216"/>
        <end position="218"/>
    </location>
</feature>
<feature type="strand" evidence="14">
    <location>
        <begin position="219"/>
        <end position="225"/>
    </location>
</feature>
<feature type="helix" evidence="14">
    <location>
        <begin position="229"/>
        <end position="250"/>
    </location>
</feature>
<feature type="turn" evidence="14">
    <location>
        <begin position="258"/>
        <end position="262"/>
    </location>
</feature>
<feature type="helix" evidence="14">
    <location>
        <begin position="263"/>
        <end position="294"/>
    </location>
</feature>
<feature type="helix" evidence="14">
    <location>
        <begin position="299"/>
        <end position="315"/>
    </location>
</feature>
<feature type="helix" evidence="14">
    <location>
        <begin position="323"/>
        <end position="338"/>
    </location>
</feature>
<feature type="strand" evidence="14">
    <location>
        <begin position="343"/>
        <end position="347"/>
    </location>
</feature>
<feature type="helix" evidence="14">
    <location>
        <begin position="351"/>
        <end position="354"/>
    </location>
</feature>
<feature type="helix" evidence="14">
    <location>
        <begin position="356"/>
        <end position="364"/>
    </location>
</feature>
<feature type="helix" evidence="14">
    <location>
        <begin position="370"/>
        <end position="385"/>
    </location>
</feature>
<feature type="helix" evidence="14">
    <location>
        <begin position="393"/>
        <end position="396"/>
    </location>
</feature>
<feature type="turn" evidence="14">
    <location>
        <begin position="397"/>
        <end position="399"/>
    </location>
</feature>
<feature type="strand" evidence="14">
    <location>
        <begin position="408"/>
        <end position="413"/>
    </location>
</feature>
<feature type="strand" evidence="14">
    <location>
        <begin position="417"/>
        <end position="419"/>
    </location>
</feature>
<feature type="helix" evidence="14">
    <location>
        <begin position="423"/>
        <end position="434"/>
    </location>
</feature>
<feature type="strand" evidence="14">
    <location>
        <begin position="442"/>
        <end position="446"/>
    </location>
</feature>
<feature type="helix" evidence="14">
    <location>
        <begin position="452"/>
        <end position="462"/>
    </location>
</feature>
<feature type="turn" evidence="14">
    <location>
        <begin position="463"/>
        <end position="465"/>
    </location>
</feature>
<feature type="strand" evidence="14">
    <location>
        <begin position="469"/>
        <end position="473"/>
    </location>
</feature>
<feature type="helix" evidence="14">
    <location>
        <begin position="474"/>
        <end position="485"/>
    </location>
</feature>
<feature type="helix" evidence="14">
    <location>
        <begin position="486"/>
        <end position="488"/>
    </location>
</feature>
<feature type="helix" evidence="14">
    <location>
        <begin position="492"/>
        <end position="496"/>
    </location>
</feature>
<feature type="strand" evidence="14">
    <location>
        <begin position="499"/>
        <end position="501"/>
    </location>
</feature>
<feature type="turn" evidence="14">
    <location>
        <begin position="502"/>
        <end position="504"/>
    </location>
</feature>
<feature type="strand" evidence="14">
    <location>
        <begin position="505"/>
        <end position="507"/>
    </location>
</feature>
<feature type="strand" evidence="14">
    <location>
        <begin position="509"/>
        <end position="516"/>
    </location>
</feature>
<feature type="strand" evidence="14">
    <location>
        <begin position="519"/>
        <end position="526"/>
    </location>
</feature>
<feature type="strand" evidence="14">
    <location>
        <begin position="534"/>
        <end position="539"/>
    </location>
</feature>
<feature type="helix" evidence="14">
    <location>
        <begin position="540"/>
        <end position="548"/>
    </location>
</feature>
<feature type="turn" evidence="14">
    <location>
        <begin position="549"/>
        <end position="551"/>
    </location>
</feature>
<feature type="turn" evidence="14">
    <location>
        <begin position="554"/>
        <end position="556"/>
    </location>
</feature>
<feature type="helix" evidence="14">
    <location>
        <begin position="571"/>
        <end position="603"/>
    </location>
</feature>
<feature type="helix" evidence="14">
    <location>
        <begin position="608"/>
        <end position="612"/>
    </location>
</feature>
<feature type="helix" evidence="14">
    <location>
        <begin position="616"/>
        <end position="619"/>
    </location>
</feature>
<feature type="helix" evidence="14">
    <location>
        <begin position="623"/>
        <end position="625"/>
    </location>
</feature>
<feature type="strand" evidence="14">
    <location>
        <begin position="635"/>
        <end position="639"/>
    </location>
</feature>
<feature type="helix" evidence="14">
    <location>
        <begin position="641"/>
        <end position="654"/>
    </location>
</feature>
<feature type="turn" evidence="14">
    <location>
        <begin position="655"/>
        <end position="657"/>
    </location>
</feature>
<feature type="helix" evidence="14">
    <location>
        <begin position="663"/>
        <end position="671"/>
    </location>
</feature>
<feature type="helix" evidence="14">
    <location>
        <begin position="673"/>
        <end position="675"/>
    </location>
</feature>
<feature type="helix" evidence="14">
    <location>
        <begin position="679"/>
        <end position="682"/>
    </location>
</feature>
<feature type="helix" evidence="14">
    <location>
        <begin position="696"/>
        <end position="708"/>
    </location>
</feature>
<feature type="helix" evidence="14">
    <location>
        <begin position="717"/>
        <end position="734"/>
    </location>
</feature>
<feature type="turn" evidence="14">
    <location>
        <begin position="752"/>
        <end position="754"/>
    </location>
</feature>
<feature type="helix" evidence="14">
    <location>
        <begin position="755"/>
        <end position="760"/>
    </location>
</feature>
<feature type="strand" evidence="14">
    <location>
        <begin position="777"/>
        <end position="781"/>
    </location>
</feature>
<feature type="turn" evidence="14">
    <location>
        <begin position="784"/>
        <end position="786"/>
    </location>
</feature>
<feature type="helix" evidence="14">
    <location>
        <begin position="791"/>
        <end position="798"/>
    </location>
</feature>
<feature type="helix" evidence="14">
    <location>
        <begin position="803"/>
        <end position="805"/>
    </location>
</feature>
<feature type="strand" evidence="14">
    <location>
        <begin position="812"/>
        <end position="815"/>
    </location>
</feature>
<feature type="helix" evidence="14">
    <location>
        <begin position="817"/>
        <end position="820"/>
    </location>
</feature>
<feature type="helix" evidence="14">
    <location>
        <begin position="822"/>
        <end position="838"/>
    </location>
</feature>
<feature type="strand" evidence="14">
    <location>
        <begin position="843"/>
        <end position="849"/>
    </location>
</feature>
<feature type="helix" evidence="14">
    <location>
        <begin position="851"/>
        <end position="859"/>
    </location>
</feature>
<feature type="helix" evidence="14">
    <location>
        <begin position="861"/>
        <end position="863"/>
    </location>
</feature>
<feature type="strand" evidence="14">
    <location>
        <begin position="868"/>
        <end position="870"/>
    </location>
</feature>
<feature type="strand" evidence="14">
    <location>
        <begin position="875"/>
        <end position="877"/>
    </location>
</feature>
<feature type="helix" evidence="14">
    <location>
        <begin position="878"/>
        <end position="880"/>
    </location>
</feature>
<feature type="helix" evidence="14">
    <location>
        <begin position="883"/>
        <end position="891"/>
    </location>
</feature>
<comment type="function">
    <text evidence="4 5">Glycyl radical subunit of the HPA decarboxylase that decarboxylates phenylacetates with a hydroxyl group in the p-position. Active toward 4-hydroxyphenylacetate and 3,4-dihydroxyphenylacetate, forming 4-methylphenol and 4-methylcatechol, respectively. Is likely involved in the catabolism of aromatic amino acids such as tyrosine fermentation. 4-methylphenol (p-cresol) formation provides metabolic toxicity, which allows an active suppression of other microbes and may provide growth advantages for the producers in highly competitive environments (PubMed:16878993). The large subunit is the catalytic subunit that binds the substrate (PubMed:21823587).</text>
</comment>
<comment type="catalytic activity">
    <reaction evidence="4">
        <text>4-hydroxyphenylacetate + H(+) = 4-methylphenol + CO2</text>
        <dbReference type="Rhea" id="RHEA:22732"/>
        <dbReference type="ChEBI" id="CHEBI:15378"/>
        <dbReference type="ChEBI" id="CHEBI:16526"/>
        <dbReference type="ChEBI" id="CHEBI:17847"/>
        <dbReference type="ChEBI" id="CHEBI:48999"/>
        <dbReference type="EC" id="4.1.1.83"/>
    </reaction>
    <physiologicalReaction direction="left-to-right" evidence="9">
        <dbReference type="Rhea" id="RHEA:22733"/>
    </physiologicalReaction>
</comment>
<comment type="catalytic activity">
    <reaction evidence="4">
        <text>3,4-dihydroxyphenylacetate + H(+) = 4-methylcatechol + CO2</text>
        <dbReference type="Rhea" id="RHEA:62556"/>
        <dbReference type="ChEBI" id="CHEBI:15378"/>
        <dbReference type="ChEBI" id="CHEBI:16526"/>
        <dbReference type="ChEBI" id="CHEBI:17254"/>
        <dbReference type="ChEBI" id="CHEBI:17612"/>
        <dbReference type="EC" id="4.1.1.83"/>
    </reaction>
    <physiologicalReaction direction="left-to-right" evidence="9">
        <dbReference type="Rhea" id="RHEA:62557"/>
    </physiologicalReaction>
</comment>
<comment type="biophysicochemical properties">
    <kinetics>
        <KM evidence="4">358 uM for 4-hydroxyphenylacetate</KM>
        <KM evidence="4">388 uM for 3,4-dihydroxyphenylacetate</KM>
        <Vmax evidence="4">18.45 umol/min/mg enzyme for the decarboxylation of 4-hydroxyphenylacetate</Vmax>
        <Vmax evidence="4">9.12 umol/min/mg enzyme for the decarboxylation of 3,4-hydroxyphenylacetate</Vmax>
        <text evidence="4">kcat is 135 sec(-1) for the decarboxylation of 4-hydroxyphenylacetate. kcat is 67 sec(-1) for the decarboxylation of 3,4-hydroxyphenylacetate.</text>
    </kinetics>
</comment>
<comment type="subunit">
    <text evidence="4 5">Heterooctamer consisting of 4 large (HpdB) subunits and 4 small (HpdC) subunits, arranged as a tetramer of heterodimers (PubMed:16878993, PubMed:21823587). Also forms a catalytically inactive homodimer (PubMed:16878993).</text>
</comment>
<comment type="PTM">
    <text evidence="4">Requires the activating protein CsdA to generate the key active site glycyl radical that is involved in catalysis.</text>
</comment>
<comment type="PTM">
    <text evidence="4">Phosphorylated on serine. Phosphorylation may trigger the formation of the active heterooctamers and thereby regulates enzyme activity.</text>
</comment>
<comment type="similarity">
    <text evidence="8">Belongs to the glycyl radical enzyme (GRE) family. HPAD subfamily.</text>
</comment>
<gene>
    <name evidence="11" type="primary">csdB</name>
</gene>
<name>HPDL_CLOSL</name>
<keyword id="KW-0002">3D-structure</keyword>
<keyword id="KW-0456">Lyase</keyword>
<keyword id="KW-0556">Organic radical</keyword>
<keyword id="KW-0597">Phosphoprotein</keyword>
<accession>Q38HX4</accession>
<reference key="1">
    <citation type="journal article" date="2006" name="Biochemistry">
        <title>4-Hydroxyphenylacetate decarboxylases: properties of a novel subclass of glycyl radical enzyme systems.</title>
        <authorList>
            <person name="Yu L."/>
            <person name="Blaser M."/>
            <person name="Andrei P.I."/>
            <person name="Pierik A.J."/>
            <person name="Selmer T."/>
        </authorList>
    </citation>
    <scope>NUCLEOTIDE SEQUENCE [GENOMIC DNA]</scope>
    <scope>FUNCTION</scope>
    <scope>CATALYTIC ACTIVITY</scope>
    <scope>ACTIVATION BY CSDA</scope>
    <scope>BIOPHYSICOCHEMICAL PROPERTIES</scope>
    <scope>SUBUNIT</scope>
    <scope>SERINE PHOSPHORYLATION</scope>
    <source>
        <strain evidence="11">ATCC 25775 / DSM 757 / JCM 1414 / NCIB 8855 / VPI 5393</strain>
    </source>
</reference>
<reference evidence="12 13" key="2">
    <citation type="journal article" date="2011" name="J. Am. Chem. Soc.">
        <title>Structural basis for a Kolbe-type decarboxylation catalyzed by a glycyl radical enzyme.</title>
        <authorList>
            <person name="Martins B.M."/>
            <person name="Blaser M."/>
            <person name="Feliks M."/>
            <person name="Ullmann G.M."/>
            <person name="Buckel W."/>
            <person name="Selmer T."/>
        </authorList>
    </citation>
    <scope>X-RAY CRYSTALLOGRAPHY (1.75 ANGSTROMS) IN COMPLEX WITH HPA DECARBOXYLASE SMALL SUBUNIT AND 4-HYDROXYPHENYLACETATE</scope>
    <scope>SUBUNIT</scope>
    <scope>REACTION MECHANISM</scope>
    <scope>ACTIVE SITE</scope>
</reference>